<sequence>MKNTSGHREPRTRPRERDPDRRPHPDRDHHVERSRDRGGDRHRERNGDVRGNGDRRAGREQRTDRDQRQDRHRDAGHRASEQRALEKSRQSRARPEPWGPSWDAAPTPGPAPWGPRELSQKHGLGRRGLESERASERYVPTYSVPALQEEEYYQSEAEGLLDCHKCRYLCTGRACWQMLKALLNLLILACSSVSYNSTGGYTGITSLGGIYYYQYGGAYSGFDGADGERAQQLDVQFYQLKLPTVTAAMAYSGALMTFSCLTLLAGALRVPWHCPLWLVIEGLMDALIAGAYVPGLYFFFQHLSAAYSSDVCKERETLYQSKGYSGFNCGVHGGDIGAGVFAAMAIGVFAVGAVLAFRGYRKVKKLKEKPTEMLEF</sequence>
<proteinExistence type="evidence at transcript level"/>
<dbReference type="EMBL" id="AK007346">
    <property type="protein sequence ID" value="BAB24975.1"/>
    <property type="molecule type" value="mRNA"/>
</dbReference>
<dbReference type="EMBL" id="BC025851">
    <property type="protein sequence ID" value="AAH25851.1"/>
    <property type="molecule type" value="mRNA"/>
</dbReference>
<dbReference type="CCDS" id="CCDS22656.1">
    <molecule id="Q9D956-2"/>
</dbReference>
<dbReference type="CCDS" id="CCDS22657.1">
    <molecule id="Q9D956-1"/>
</dbReference>
<dbReference type="RefSeq" id="NP_082860.2">
    <property type="nucleotide sequence ID" value="NM_028584.3"/>
</dbReference>
<dbReference type="RefSeq" id="NP_997612.2">
    <property type="nucleotide sequence ID" value="NM_212447.2"/>
</dbReference>
<dbReference type="FunCoup" id="Q9D956">
    <property type="interactions" value="15"/>
</dbReference>
<dbReference type="GlyGen" id="Q9D956">
    <property type="glycosylation" value="1 site"/>
</dbReference>
<dbReference type="iPTMnet" id="Q9D956"/>
<dbReference type="PhosphoSitePlus" id="Q9D956"/>
<dbReference type="ProteomicsDB" id="287302">
    <molecule id="Q9D956-1"/>
</dbReference>
<dbReference type="ProteomicsDB" id="287303">
    <molecule id="Q9D956-2"/>
</dbReference>
<dbReference type="DNASU" id="73608"/>
<dbReference type="GeneID" id="73608"/>
<dbReference type="KEGG" id="mmu:73608"/>
<dbReference type="AGR" id="MGI:1920858"/>
<dbReference type="CTD" id="91862"/>
<dbReference type="MGI" id="MGI:1920858">
    <property type="gene designation" value="Marveld3"/>
</dbReference>
<dbReference type="InParanoid" id="Q9D956"/>
<dbReference type="OrthoDB" id="8844724at2759"/>
<dbReference type="PhylomeDB" id="Q9D956"/>
<dbReference type="BioGRID-ORCS" id="73608">
    <property type="hits" value="1 hit in 79 CRISPR screens"/>
</dbReference>
<dbReference type="ChiTaRS" id="Marveld3">
    <property type="organism name" value="mouse"/>
</dbReference>
<dbReference type="PRO" id="PR:Q9D956"/>
<dbReference type="Proteomes" id="UP000000589">
    <property type="component" value="Unplaced"/>
</dbReference>
<dbReference type="RNAct" id="Q9D956">
    <property type="molecule type" value="protein"/>
</dbReference>
<dbReference type="GO" id="GO:0005923">
    <property type="term" value="C:bicellular tight junction"/>
    <property type="evidence" value="ECO:0000314"/>
    <property type="project" value="MGI"/>
</dbReference>
<dbReference type="GO" id="GO:0016020">
    <property type="term" value="C:membrane"/>
    <property type="evidence" value="ECO:0007669"/>
    <property type="project" value="UniProtKB-SubCell"/>
</dbReference>
<dbReference type="GO" id="GO:0031435">
    <property type="term" value="F:mitogen-activated protein kinase kinase kinase binding"/>
    <property type="evidence" value="ECO:0000266"/>
    <property type="project" value="MGI"/>
</dbReference>
<dbReference type="GO" id="GO:0045216">
    <property type="term" value="P:cell-cell junction organization"/>
    <property type="evidence" value="ECO:0000315"/>
    <property type="project" value="MGI"/>
</dbReference>
<dbReference type="GO" id="GO:0010633">
    <property type="term" value="P:negative regulation of epithelial cell migration"/>
    <property type="evidence" value="ECO:0000314"/>
    <property type="project" value="MGI"/>
</dbReference>
<dbReference type="GO" id="GO:0050680">
    <property type="term" value="P:negative regulation of epithelial cell proliferation"/>
    <property type="evidence" value="ECO:0000314"/>
    <property type="project" value="MGI"/>
</dbReference>
<dbReference type="GO" id="GO:0046329">
    <property type="term" value="P:negative regulation of JNK cascade"/>
    <property type="evidence" value="ECO:0000266"/>
    <property type="project" value="MGI"/>
</dbReference>
<dbReference type="GO" id="GO:1902414">
    <property type="term" value="P:protein localization to cell junction"/>
    <property type="evidence" value="ECO:0000266"/>
    <property type="project" value="MGI"/>
</dbReference>
<dbReference type="GO" id="GO:0006970">
    <property type="term" value="P:response to osmotic stress"/>
    <property type="evidence" value="ECO:0000266"/>
    <property type="project" value="MGI"/>
</dbReference>
<dbReference type="InterPro" id="IPR008253">
    <property type="entry name" value="Marvel"/>
</dbReference>
<dbReference type="InterPro" id="IPR053077">
    <property type="entry name" value="MARVEL_domain_protein_3"/>
</dbReference>
<dbReference type="PANTHER" id="PTHR34609">
    <property type="entry name" value="GEO08273P1-RELATED"/>
    <property type="match status" value="1"/>
</dbReference>
<dbReference type="PANTHER" id="PTHR34609:SF17">
    <property type="entry name" value="GEO08273P1-RELATED"/>
    <property type="match status" value="1"/>
</dbReference>
<dbReference type="Pfam" id="PF01284">
    <property type="entry name" value="MARVEL"/>
    <property type="match status" value="1"/>
</dbReference>
<dbReference type="PROSITE" id="PS51225">
    <property type="entry name" value="MARVEL"/>
    <property type="match status" value="1"/>
</dbReference>
<organism>
    <name type="scientific">Mus musculus</name>
    <name type="common">Mouse</name>
    <dbReference type="NCBI Taxonomy" id="10090"/>
    <lineage>
        <taxon>Eukaryota</taxon>
        <taxon>Metazoa</taxon>
        <taxon>Chordata</taxon>
        <taxon>Craniata</taxon>
        <taxon>Vertebrata</taxon>
        <taxon>Euteleostomi</taxon>
        <taxon>Mammalia</taxon>
        <taxon>Eutheria</taxon>
        <taxon>Euarchontoglires</taxon>
        <taxon>Glires</taxon>
        <taxon>Rodentia</taxon>
        <taxon>Myomorpha</taxon>
        <taxon>Muroidea</taxon>
        <taxon>Muridae</taxon>
        <taxon>Murinae</taxon>
        <taxon>Mus</taxon>
        <taxon>Mus</taxon>
    </lineage>
</organism>
<reference key="1">
    <citation type="journal article" date="2005" name="Science">
        <title>The transcriptional landscape of the mammalian genome.</title>
        <authorList>
            <person name="Carninci P."/>
            <person name="Kasukawa T."/>
            <person name="Katayama S."/>
            <person name="Gough J."/>
            <person name="Frith M.C."/>
            <person name="Maeda N."/>
            <person name="Oyama R."/>
            <person name="Ravasi T."/>
            <person name="Lenhard B."/>
            <person name="Wells C."/>
            <person name="Kodzius R."/>
            <person name="Shimokawa K."/>
            <person name="Bajic V.B."/>
            <person name="Brenner S.E."/>
            <person name="Batalov S."/>
            <person name="Forrest A.R."/>
            <person name="Zavolan M."/>
            <person name="Davis M.J."/>
            <person name="Wilming L.G."/>
            <person name="Aidinis V."/>
            <person name="Allen J.E."/>
            <person name="Ambesi-Impiombato A."/>
            <person name="Apweiler R."/>
            <person name="Aturaliya R.N."/>
            <person name="Bailey T.L."/>
            <person name="Bansal M."/>
            <person name="Baxter L."/>
            <person name="Beisel K.W."/>
            <person name="Bersano T."/>
            <person name="Bono H."/>
            <person name="Chalk A.M."/>
            <person name="Chiu K.P."/>
            <person name="Choudhary V."/>
            <person name="Christoffels A."/>
            <person name="Clutterbuck D.R."/>
            <person name="Crowe M.L."/>
            <person name="Dalla E."/>
            <person name="Dalrymple B.P."/>
            <person name="de Bono B."/>
            <person name="Della Gatta G."/>
            <person name="di Bernardo D."/>
            <person name="Down T."/>
            <person name="Engstrom P."/>
            <person name="Fagiolini M."/>
            <person name="Faulkner G."/>
            <person name="Fletcher C.F."/>
            <person name="Fukushima T."/>
            <person name="Furuno M."/>
            <person name="Futaki S."/>
            <person name="Gariboldi M."/>
            <person name="Georgii-Hemming P."/>
            <person name="Gingeras T.R."/>
            <person name="Gojobori T."/>
            <person name="Green R.E."/>
            <person name="Gustincich S."/>
            <person name="Harbers M."/>
            <person name="Hayashi Y."/>
            <person name="Hensch T.K."/>
            <person name="Hirokawa N."/>
            <person name="Hill D."/>
            <person name="Huminiecki L."/>
            <person name="Iacono M."/>
            <person name="Ikeo K."/>
            <person name="Iwama A."/>
            <person name="Ishikawa T."/>
            <person name="Jakt M."/>
            <person name="Kanapin A."/>
            <person name="Katoh M."/>
            <person name="Kawasawa Y."/>
            <person name="Kelso J."/>
            <person name="Kitamura H."/>
            <person name="Kitano H."/>
            <person name="Kollias G."/>
            <person name="Krishnan S.P."/>
            <person name="Kruger A."/>
            <person name="Kummerfeld S.K."/>
            <person name="Kurochkin I.V."/>
            <person name="Lareau L.F."/>
            <person name="Lazarevic D."/>
            <person name="Lipovich L."/>
            <person name="Liu J."/>
            <person name="Liuni S."/>
            <person name="McWilliam S."/>
            <person name="Madan Babu M."/>
            <person name="Madera M."/>
            <person name="Marchionni L."/>
            <person name="Matsuda H."/>
            <person name="Matsuzawa S."/>
            <person name="Miki H."/>
            <person name="Mignone F."/>
            <person name="Miyake S."/>
            <person name="Morris K."/>
            <person name="Mottagui-Tabar S."/>
            <person name="Mulder N."/>
            <person name="Nakano N."/>
            <person name="Nakauchi H."/>
            <person name="Ng P."/>
            <person name="Nilsson R."/>
            <person name="Nishiguchi S."/>
            <person name="Nishikawa S."/>
            <person name="Nori F."/>
            <person name="Ohara O."/>
            <person name="Okazaki Y."/>
            <person name="Orlando V."/>
            <person name="Pang K.C."/>
            <person name="Pavan W.J."/>
            <person name="Pavesi G."/>
            <person name="Pesole G."/>
            <person name="Petrovsky N."/>
            <person name="Piazza S."/>
            <person name="Reed J."/>
            <person name="Reid J.F."/>
            <person name="Ring B.Z."/>
            <person name="Ringwald M."/>
            <person name="Rost B."/>
            <person name="Ruan Y."/>
            <person name="Salzberg S.L."/>
            <person name="Sandelin A."/>
            <person name="Schneider C."/>
            <person name="Schoenbach C."/>
            <person name="Sekiguchi K."/>
            <person name="Semple C.A."/>
            <person name="Seno S."/>
            <person name="Sessa L."/>
            <person name="Sheng Y."/>
            <person name="Shibata Y."/>
            <person name="Shimada H."/>
            <person name="Shimada K."/>
            <person name="Silva D."/>
            <person name="Sinclair B."/>
            <person name="Sperling S."/>
            <person name="Stupka E."/>
            <person name="Sugiura K."/>
            <person name="Sultana R."/>
            <person name="Takenaka Y."/>
            <person name="Taki K."/>
            <person name="Tammoja K."/>
            <person name="Tan S.L."/>
            <person name="Tang S."/>
            <person name="Taylor M.S."/>
            <person name="Tegner J."/>
            <person name="Teichmann S.A."/>
            <person name="Ueda H.R."/>
            <person name="van Nimwegen E."/>
            <person name="Verardo R."/>
            <person name="Wei C.L."/>
            <person name="Yagi K."/>
            <person name="Yamanishi H."/>
            <person name="Zabarovsky E."/>
            <person name="Zhu S."/>
            <person name="Zimmer A."/>
            <person name="Hide W."/>
            <person name="Bult C."/>
            <person name="Grimmond S.M."/>
            <person name="Teasdale R.D."/>
            <person name="Liu E.T."/>
            <person name="Brusic V."/>
            <person name="Quackenbush J."/>
            <person name="Wahlestedt C."/>
            <person name="Mattick J.S."/>
            <person name="Hume D.A."/>
            <person name="Kai C."/>
            <person name="Sasaki D."/>
            <person name="Tomaru Y."/>
            <person name="Fukuda S."/>
            <person name="Kanamori-Katayama M."/>
            <person name="Suzuki M."/>
            <person name="Aoki J."/>
            <person name="Arakawa T."/>
            <person name="Iida J."/>
            <person name="Imamura K."/>
            <person name="Itoh M."/>
            <person name="Kato T."/>
            <person name="Kawaji H."/>
            <person name="Kawagashira N."/>
            <person name="Kawashima T."/>
            <person name="Kojima M."/>
            <person name="Kondo S."/>
            <person name="Konno H."/>
            <person name="Nakano K."/>
            <person name="Ninomiya N."/>
            <person name="Nishio T."/>
            <person name="Okada M."/>
            <person name="Plessy C."/>
            <person name="Shibata K."/>
            <person name="Shiraki T."/>
            <person name="Suzuki S."/>
            <person name="Tagami M."/>
            <person name="Waki K."/>
            <person name="Watahiki A."/>
            <person name="Okamura-Oho Y."/>
            <person name="Suzuki H."/>
            <person name="Kawai J."/>
            <person name="Hayashizaki Y."/>
        </authorList>
    </citation>
    <scope>NUCLEOTIDE SEQUENCE [LARGE SCALE MRNA] (ISOFORM 1)</scope>
    <source>
        <strain>C57BL/6J</strain>
        <tissue>Pancreas</tissue>
    </source>
</reference>
<reference key="2">
    <citation type="journal article" date="2004" name="Genome Res.">
        <title>The status, quality, and expansion of the NIH full-length cDNA project: the Mammalian Gene Collection (MGC).</title>
        <authorList>
            <consortium name="The MGC Project Team"/>
        </authorList>
    </citation>
    <scope>NUCLEOTIDE SEQUENCE [LARGE SCALE MRNA] (ISOFORM 2)</scope>
    <source>
        <tissue>Mammary gland</tissue>
    </source>
</reference>
<reference key="3">
    <citation type="journal article" date="2009" name="BMC Cell Biol.">
        <title>Identification of MarvelD3 as a tight junction-associated transmembrane protein of the occludin family.</title>
        <authorList>
            <person name="Steed E."/>
            <person name="Rodrigues N.T."/>
            <person name="Balda M.S."/>
            <person name="Matter K."/>
        </authorList>
    </citation>
    <scope>TISSUE SPECIFICITY</scope>
</reference>
<accession>Q9D956</accession>
<accession>Q8R109</accession>
<evidence type="ECO:0000250" key="1"/>
<evidence type="ECO:0000255" key="2"/>
<evidence type="ECO:0000255" key="3">
    <source>
        <dbReference type="PROSITE-ProRule" id="PRU00581"/>
    </source>
</evidence>
<evidence type="ECO:0000256" key="4">
    <source>
        <dbReference type="SAM" id="MobiDB-lite"/>
    </source>
</evidence>
<evidence type="ECO:0000269" key="5">
    <source>
    </source>
</evidence>
<evidence type="ECO:0000303" key="6">
    <source>
    </source>
</evidence>
<evidence type="ECO:0000305" key="7"/>
<comment type="function">
    <text evidence="1">As a component of tight junctions, plays a role in paracellular ion conductivity.</text>
</comment>
<comment type="subcellular location">
    <subcellularLocation>
        <location evidence="7">Membrane</location>
        <topology evidence="7">Multi-pass membrane protein</topology>
    </subcellularLocation>
    <subcellularLocation>
        <location evidence="1">Cell junction</location>
        <location evidence="1">Tight junction</location>
    </subcellularLocation>
</comment>
<comment type="alternative products">
    <event type="alternative splicing"/>
    <isoform>
        <id>Q9D956-1</id>
        <name>1</name>
        <sequence type="displayed"/>
    </isoform>
    <isoform>
        <id>Q9D956-2</id>
        <name>2</name>
        <sequence type="described" ref="VSP_022323"/>
    </isoform>
</comment>
<comment type="tissue specificity">
    <text evidence="5">Widely expressed with highest levels in small intestine, colon, stomach and lung. Liver expresses only isoform 2.</text>
</comment>
<gene>
    <name type="primary">Marveld3</name>
</gene>
<keyword id="KW-0025">Alternative splicing</keyword>
<keyword id="KW-0965">Cell junction</keyword>
<keyword id="KW-0472">Membrane</keyword>
<keyword id="KW-1185">Reference proteome</keyword>
<keyword id="KW-0796">Tight junction</keyword>
<keyword id="KW-0812">Transmembrane</keyword>
<keyword id="KW-1133">Transmembrane helix</keyword>
<name>MALD3_MOUSE</name>
<protein>
    <recommendedName>
        <fullName>MARVEL domain-containing protein 3</fullName>
    </recommendedName>
</protein>
<feature type="chain" id="PRO_0000271530" description="MARVEL domain-containing protein 3">
    <location>
        <begin position="1"/>
        <end position="376"/>
    </location>
</feature>
<feature type="topological domain" description="Cytoplasmic" evidence="2">
    <location>
        <begin position="1"/>
        <end position="173"/>
    </location>
</feature>
<feature type="transmembrane region" description="Helical" evidence="2">
    <location>
        <begin position="174"/>
        <end position="194"/>
    </location>
</feature>
<feature type="topological domain" description="Extracellular" evidence="2">
    <location>
        <begin position="195"/>
        <end position="247"/>
    </location>
</feature>
<feature type="transmembrane region" description="Helical" evidence="2">
    <location>
        <begin position="248"/>
        <end position="268"/>
    </location>
</feature>
<feature type="topological domain" description="Cytoplasmic" evidence="2">
    <location>
        <begin position="269"/>
        <end position="275"/>
    </location>
</feature>
<feature type="transmembrane region" description="Helical" evidence="2">
    <location>
        <begin position="276"/>
        <end position="296"/>
    </location>
</feature>
<feature type="topological domain" description="Extracellular" evidence="2">
    <location>
        <begin position="297"/>
        <end position="335"/>
    </location>
</feature>
<feature type="transmembrane region" description="Helical" evidence="2">
    <location>
        <begin position="336"/>
        <end position="356"/>
    </location>
</feature>
<feature type="topological domain" description="Cytoplasmic" evidence="2">
    <location>
        <begin position="357"/>
        <end position="376"/>
    </location>
</feature>
<feature type="domain" description="MARVEL" evidence="3">
    <location>
        <begin position="168"/>
        <end position="361"/>
    </location>
</feature>
<feature type="region of interest" description="Disordered" evidence="4">
    <location>
        <begin position="1"/>
        <end position="134"/>
    </location>
</feature>
<feature type="compositionally biased region" description="Basic and acidic residues" evidence="4">
    <location>
        <begin position="1"/>
        <end position="95"/>
    </location>
</feature>
<feature type="splice variant" id="VSP_022323" description="In isoform 2." evidence="6">
    <original>ACWQMLKALLNLLILACSSVSYNSTGGYTGITSLGGIYYYQYGGAYSGFDGADGERAQQLDVQFYQLKLPTVTAAMAYSGALMTFSCLTLLAGALRVPWHCPLWLVIEGLMDALIAGAYVPGLYFFFQHLSAAYSSDVCKERETLYQSKGYSGFNCGVHGGDIGAGVFAAMAIGVFAVGAVLAFRGYRKVKKLKEKPTEMLEF</original>
    <variation>GVVQIMEVILNAMVLICIVASYFVLAGFSASFASGSGFGNNYYSPFEGTELEQVRQLDQQYTILRSPLIYGGVAVSLGLGVLTMGVLLQGAKSLRKLPRRWLLLEAAFSLLAAVGYCVAIGFYLYAALRINSTDTCKTRERVYARKGLTWMNCQLAGTDGAAATFACFLVILYAASVVMALRAYREQKHYKDSQEQHRNYRDVPEYLWSGTL</variation>
    <location>
        <begin position="174"/>
        <end position="376"/>
    </location>
</feature>
<feature type="sequence conflict" description="In Ref. 2; AAH25851." evidence="7" ref="2">
    <original>R</original>
    <variation>P</variation>
    <location>
        <position position="116"/>
    </location>
</feature>